<gene>
    <name type="ordered locus">pXO2-45</name>
    <name type="ordered locus">BXB0052</name>
    <name type="ordered locus">GBAA_pXO2_0052</name>
</gene>
<accession>Q9RMY7</accession>
<keyword id="KW-0614">Plasmid</keyword>
<keyword id="KW-1185">Reference proteome</keyword>
<dbReference type="EMBL" id="AF188935">
    <property type="protein sequence ID" value="AAF13650.1"/>
    <property type="molecule type" value="Genomic_DNA"/>
</dbReference>
<dbReference type="EMBL" id="AE011191">
    <property type="protein sequence ID" value="AAM26210.1"/>
    <property type="molecule type" value="Genomic_DNA"/>
</dbReference>
<dbReference type="EMBL" id="AE017335">
    <property type="protein sequence ID" value="AAT28982.2"/>
    <property type="molecule type" value="Genomic_DNA"/>
</dbReference>
<dbReference type="RefSeq" id="NP_053200.1">
    <property type="nucleotide sequence ID" value="NC_002146.1"/>
</dbReference>
<dbReference type="RefSeq" id="WP_000637483.1">
    <property type="nucleotide sequence ID" value="NZ_VTZL01000009.1"/>
</dbReference>
<dbReference type="SMR" id="Q9RMY7"/>
<dbReference type="GeneID" id="45025355"/>
<dbReference type="KEGG" id="bar:GBAA_pXO2_0052"/>
<dbReference type="HOGENOM" id="CLU_117144_3_2_9"/>
<dbReference type="OMA" id="LECHVIT"/>
<dbReference type="Proteomes" id="UP000000594">
    <property type="component" value="Plasmid pXO2"/>
</dbReference>
<dbReference type="Gene3D" id="3.30.110.70">
    <property type="entry name" value="Hypothetical protein apc22750. Chain B"/>
    <property type="match status" value="1"/>
</dbReference>
<dbReference type="HAMAP" id="MF_00338">
    <property type="entry name" value="UPF0145"/>
    <property type="match status" value="1"/>
</dbReference>
<dbReference type="InterPro" id="IPR035439">
    <property type="entry name" value="UPF0145_dom_sf"/>
</dbReference>
<dbReference type="InterPro" id="IPR002765">
    <property type="entry name" value="UPF0145_YbjQ-like"/>
</dbReference>
<dbReference type="NCBIfam" id="NF009495">
    <property type="entry name" value="PRK12855.1"/>
    <property type="match status" value="1"/>
</dbReference>
<dbReference type="NCBIfam" id="NF009496">
    <property type="entry name" value="PRK12856.1"/>
    <property type="match status" value="1"/>
</dbReference>
<dbReference type="PANTHER" id="PTHR34068">
    <property type="entry name" value="UPF0145 PROTEIN YBJQ"/>
    <property type="match status" value="1"/>
</dbReference>
<dbReference type="PANTHER" id="PTHR34068:SF1">
    <property type="entry name" value="UPF0145 PROTEIN YBJQ"/>
    <property type="match status" value="1"/>
</dbReference>
<dbReference type="Pfam" id="PF01906">
    <property type="entry name" value="YbjQ_1"/>
    <property type="match status" value="1"/>
</dbReference>
<dbReference type="SUPFAM" id="SSF117782">
    <property type="entry name" value="YbjQ-like"/>
    <property type="match status" value="1"/>
</dbReference>
<name>Y6552_BACAN</name>
<sequence>MIVTTTAEIQGKEIIEYIDIVNGEAIMGANIVRDVFASVRDVVGGRAGAYESKLKEARDIAMDEMKELAKQKGVNAIVGIDVDYAIIRAGMLMVAVSGTAVRI</sequence>
<evidence type="ECO:0000305" key="1"/>
<proteinExistence type="inferred from homology"/>
<protein>
    <recommendedName>
        <fullName>UPF0145 protein pXO2-45/BXB0052/GBAA_pXO2_0052</fullName>
    </recommendedName>
</protein>
<reference key="1">
    <citation type="journal article" date="1999" name="J. Appl. Microbiol.">
        <title>Sequence, assembly and analysis of pXO1 and pXO2.</title>
        <authorList>
            <person name="Okinaka R.T."/>
            <person name="Cloud K."/>
            <person name="Hampton O."/>
            <person name="Hoffmaster A."/>
            <person name="Hill K.K."/>
            <person name="Keim P."/>
            <person name="Koehler T."/>
            <person name="Lamke G."/>
            <person name="Kumano S."/>
            <person name="Manter D."/>
            <person name="Martinez Y."/>
            <person name="Ricke D."/>
            <person name="Svensson R."/>
            <person name="Jackson P.J."/>
        </authorList>
    </citation>
    <scope>NUCLEOTIDE SEQUENCE [GENOMIC DNA]</scope>
    <source>
        <strain>Pasteur</strain>
    </source>
</reference>
<reference key="2">
    <citation type="journal article" date="2002" name="Science">
        <title>Comparative genome sequencing for discovery of novel polymorphisms in Bacillus anthracis.</title>
        <authorList>
            <person name="Read T.D."/>
            <person name="Salzberg S.L."/>
            <person name="Pop M."/>
            <person name="Shumway M.F."/>
            <person name="Umayam L."/>
            <person name="Jiang L."/>
            <person name="Holtzapple E."/>
            <person name="Busch J.D."/>
            <person name="Smith K.L."/>
            <person name="Schupp J.M."/>
            <person name="Solomon D."/>
            <person name="Keim P."/>
            <person name="Fraser C.M."/>
        </authorList>
    </citation>
    <scope>NUCLEOTIDE SEQUENCE [GENOMIC DNA]</scope>
    <source>
        <strain>Ames / isolate Florida / A2012</strain>
    </source>
</reference>
<reference key="3">
    <citation type="journal article" date="2009" name="J. Bacteriol.">
        <title>The complete genome sequence of Bacillus anthracis Ames 'Ancestor'.</title>
        <authorList>
            <person name="Ravel J."/>
            <person name="Jiang L."/>
            <person name="Stanley S.T."/>
            <person name="Wilson M.R."/>
            <person name="Decker R.S."/>
            <person name="Read T.D."/>
            <person name="Worsham P."/>
            <person name="Keim P.S."/>
            <person name="Salzberg S.L."/>
            <person name="Fraser-Liggett C.M."/>
            <person name="Rasko D.A."/>
        </authorList>
    </citation>
    <scope>NUCLEOTIDE SEQUENCE [LARGE SCALE GENOMIC DNA]</scope>
    <source>
        <strain>Ames ancestor</strain>
    </source>
</reference>
<geneLocation type="plasmid">
    <name>pXO2</name>
</geneLocation>
<feature type="chain" id="PRO_0000138490" description="UPF0145 protein pXO2-45/BXB0052/GBAA_pXO2_0052">
    <location>
        <begin position="1"/>
        <end position="103"/>
    </location>
</feature>
<comment type="similarity">
    <text evidence="1">Belongs to the UPF0145 family.</text>
</comment>
<organism>
    <name type="scientific">Bacillus anthracis</name>
    <dbReference type="NCBI Taxonomy" id="1392"/>
    <lineage>
        <taxon>Bacteria</taxon>
        <taxon>Bacillati</taxon>
        <taxon>Bacillota</taxon>
        <taxon>Bacilli</taxon>
        <taxon>Bacillales</taxon>
        <taxon>Bacillaceae</taxon>
        <taxon>Bacillus</taxon>
        <taxon>Bacillus cereus group</taxon>
    </lineage>
</organism>